<proteinExistence type="inferred from homology"/>
<gene>
    <name evidence="1" type="primary">katG</name>
    <name type="ordered locus">Shew185_3489</name>
</gene>
<keyword id="KW-0349">Heme</keyword>
<keyword id="KW-0376">Hydrogen peroxide</keyword>
<keyword id="KW-0408">Iron</keyword>
<keyword id="KW-0479">Metal-binding</keyword>
<keyword id="KW-0560">Oxidoreductase</keyword>
<keyword id="KW-0575">Peroxidase</keyword>
<name>KATG_SHEB8</name>
<feature type="chain" id="PRO_0000354915" description="Catalase-peroxidase">
    <location>
        <begin position="1"/>
        <end position="723"/>
    </location>
</feature>
<feature type="active site" description="Proton acceptor" evidence="1">
    <location>
        <position position="90"/>
    </location>
</feature>
<feature type="binding site" description="axial binding residue" evidence="1">
    <location>
        <position position="253"/>
    </location>
    <ligand>
        <name>heme b</name>
        <dbReference type="ChEBI" id="CHEBI:60344"/>
    </ligand>
    <ligandPart>
        <name>Fe</name>
        <dbReference type="ChEBI" id="CHEBI:18248"/>
    </ligandPart>
</feature>
<feature type="site" description="Transition state stabilizer" evidence="1">
    <location>
        <position position="86"/>
    </location>
</feature>
<feature type="cross-link" description="Tryptophyl-tyrosyl-methioninium (Trp-Tyr) (with M-238)" evidence="1">
    <location>
        <begin position="89"/>
        <end position="212"/>
    </location>
</feature>
<feature type="cross-link" description="Tryptophyl-tyrosyl-methioninium (Tyr-Met) (with W-89)" evidence="1">
    <location>
        <begin position="212"/>
        <end position="238"/>
    </location>
</feature>
<reference key="1">
    <citation type="submission" date="2007-07" db="EMBL/GenBank/DDBJ databases">
        <title>Complete sequence of chromosome of Shewanella baltica OS185.</title>
        <authorList>
            <consortium name="US DOE Joint Genome Institute"/>
            <person name="Copeland A."/>
            <person name="Lucas S."/>
            <person name="Lapidus A."/>
            <person name="Barry K."/>
            <person name="Glavina del Rio T."/>
            <person name="Dalin E."/>
            <person name="Tice H."/>
            <person name="Pitluck S."/>
            <person name="Sims D."/>
            <person name="Brettin T."/>
            <person name="Bruce D."/>
            <person name="Detter J.C."/>
            <person name="Han C."/>
            <person name="Schmutz J."/>
            <person name="Larimer F."/>
            <person name="Land M."/>
            <person name="Hauser L."/>
            <person name="Kyrpides N."/>
            <person name="Mikhailova N."/>
            <person name="Brettar I."/>
            <person name="Rodrigues J."/>
            <person name="Konstantinidis K."/>
            <person name="Tiedje J."/>
            <person name="Richardson P."/>
        </authorList>
    </citation>
    <scope>NUCLEOTIDE SEQUENCE [LARGE SCALE GENOMIC DNA]</scope>
    <source>
        <strain>OS185</strain>
    </source>
</reference>
<dbReference type="EC" id="1.11.1.21" evidence="1"/>
<dbReference type="EMBL" id="CP000753">
    <property type="protein sequence ID" value="ABS09616.1"/>
    <property type="molecule type" value="Genomic_DNA"/>
</dbReference>
<dbReference type="RefSeq" id="WP_012090075.1">
    <property type="nucleotide sequence ID" value="NC_009665.1"/>
</dbReference>
<dbReference type="SMR" id="A6WS27"/>
<dbReference type="KEGG" id="sbm:Shew185_3489"/>
<dbReference type="HOGENOM" id="CLU_025424_2_0_6"/>
<dbReference type="GO" id="GO:0005829">
    <property type="term" value="C:cytosol"/>
    <property type="evidence" value="ECO:0007669"/>
    <property type="project" value="TreeGrafter"/>
</dbReference>
<dbReference type="GO" id="GO:0004096">
    <property type="term" value="F:catalase activity"/>
    <property type="evidence" value="ECO:0007669"/>
    <property type="project" value="UniProtKB-UniRule"/>
</dbReference>
<dbReference type="GO" id="GO:0020037">
    <property type="term" value="F:heme binding"/>
    <property type="evidence" value="ECO:0007669"/>
    <property type="project" value="InterPro"/>
</dbReference>
<dbReference type="GO" id="GO:0046872">
    <property type="term" value="F:metal ion binding"/>
    <property type="evidence" value="ECO:0007669"/>
    <property type="project" value="UniProtKB-KW"/>
</dbReference>
<dbReference type="GO" id="GO:0070301">
    <property type="term" value="P:cellular response to hydrogen peroxide"/>
    <property type="evidence" value="ECO:0007669"/>
    <property type="project" value="TreeGrafter"/>
</dbReference>
<dbReference type="GO" id="GO:0042744">
    <property type="term" value="P:hydrogen peroxide catabolic process"/>
    <property type="evidence" value="ECO:0007669"/>
    <property type="project" value="UniProtKB-KW"/>
</dbReference>
<dbReference type="CDD" id="cd00649">
    <property type="entry name" value="catalase_peroxidase_1"/>
    <property type="match status" value="1"/>
</dbReference>
<dbReference type="CDD" id="cd08200">
    <property type="entry name" value="catalase_peroxidase_2"/>
    <property type="match status" value="1"/>
</dbReference>
<dbReference type="FunFam" id="1.10.420.10:FF:000002">
    <property type="entry name" value="Catalase-peroxidase"/>
    <property type="match status" value="1"/>
</dbReference>
<dbReference type="FunFam" id="1.10.420.10:FF:000004">
    <property type="entry name" value="Catalase-peroxidase"/>
    <property type="match status" value="1"/>
</dbReference>
<dbReference type="FunFam" id="1.10.520.10:FF:000002">
    <property type="entry name" value="Catalase-peroxidase"/>
    <property type="match status" value="1"/>
</dbReference>
<dbReference type="Gene3D" id="1.10.520.10">
    <property type="match status" value="2"/>
</dbReference>
<dbReference type="Gene3D" id="1.10.420.10">
    <property type="entry name" value="Peroxidase, domain 2"/>
    <property type="match status" value="2"/>
</dbReference>
<dbReference type="HAMAP" id="MF_01961">
    <property type="entry name" value="Catal_peroxid"/>
    <property type="match status" value="1"/>
</dbReference>
<dbReference type="InterPro" id="IPR000763">
    <property type="entry name" value="Catalase_peroxidase"/>
</dbReference>
<dbReference type="InterPro" id="IPR002016">
    <property type="entry name" value="Haem_peroxidase"/>
</dbReference>
<dbReference type="InterPro" id="IPR010255">
    <property type="entry name" value="Haem_peroxidase_sf"/>
</dbReference>
<dbReference type="InterPro" id="IPR019794">
    <property type="entry name" value="Peroxidases_AS"/>
</dbReference>
<dbReference type="InterPro" id="IPR019793">
    <property type="entry name" value="Peroxidases_heam-ligand_BS"/>
</dbReference>
<dbReference type="NCBIfam" id="TIGR00198">
    <property type="entry name" value="cat_per_HPI"/>
    <property type="match status" value="1"/>
</dbReference>
<dbReference type="NCBIfam" id="NF011635">
    <property type="entry name" value="PRK15061.1"/>
    <property type="match status" value="1"/>
</dbReference>
<dbReference type="PANTHER" id="PTHR30555:SF0">
    <property type="entry name" value="CATALASE-PEROXIDASE"/>
    <property type="match status" value="1"/>
</dbReference>
<dbReference type="PANTHER" id="PTHR30555">
    <property type="entry name" value="HYDROPEROXIDASE I, BIFUNCTIONAL CATALASE-PEROXIDASE"/>
    <property type="match status" value="1"/>
</dbReference>
<dbReference type="Pfam" id="PF00141">
    <property type="entry name" value="peroxidase"/>
    <property type="match status" value="2"/>
</dbReference>
<dbReference type="PRINTS" id="PR00460">
    <property type="entry name" value="BPEROXIDASE"/>
</dbReference>
<dbReference type="PRINTS" id="PR00458">
    <property type="entry name" value="PEROXIDASE"/>
</dbReference>
<dbReference type="SUPFAM" id="SSF48113">
    <property type="entry name" value="Heme-dependent peroxidases"/>
    <property type="match status" value="2"/>
</dbReference>
<dbReference type="PROSITE" id="PS00435">
    <property type="entry name" value="PEROXIDASE_1"/>
    <property type="match status" value="1"/>
</dbReference>
<dbReference type="PROSITE" id="PS00436">
    <property type="entry name" value="PEROXIDASE_2"/>
    <property type="match status" value="1"/>
</dbReference>
<dbReference type="PROSITE" id="PS50873">
    <property type="entry name" value="PEROXIDASE_4"/>
    <property type="match status" value="1"/>
</dbReference>
<sequence length="723" mass="79703">MSENKCPMHHSAGGTTNRDWWPKQLRLDILHQHSSLSNPMGDDFNYAEAFKSLDLAAVKQDLLALMTDSQDWWPADFGHYGPLFIRMAWHSAGTYRTGDGRGGAGSGNQRFAPLNSWPDNVSLDKARRLIWPIKQKYGNKISWADLIILTGNVALESMGFKTLGFAGGRVDIWEPEADIYWGAEDKWLDDKRYSGERDLEDPLAAVQMGLIYVNPEGPNGDPDPFAAAVDIRETFARMAMNDEETVALIAGGHTFGKTHGAGDAALVGPEPEAASIEQQGLGWKSSYKSGKGGDAISSGLEVTWTSTPTQWSNNFFENLFGYEWELTKSPAGAHQWIPKNGAGKGVIPDAHDASKRHVPAMLTTDLALIFDPDYEKISRRFFEHPDEFADVFAKAWYKLTHRDMGPCTRYLGPEVPAEAFLWQDPIPAVDHPLVDEQDVTDLKLKIIGSGLTISEVVATAWASASTYRGSDMRGGANGARIRLAPQKDWPVNQPEQLAKVLKVLESIQSEFNKSGKKISLADLIVLAGCVGIDQAARNAGVEVTIPFTPGRMDATQAQTDVESFAVLEPVADGFRNYHPTQFSVSAEELLVDRAQLLTLTAPEMTVLIGGLRVLDTNADQSKTGVLTARPEFLTNDFFVNLLDMGTTWKPTSKAEDRFEGVDRVSGQPKWTASRVDLIFGSNSQLRALAEVYASSDAQLRFIDDFIAAWTKVMNLDRFDLRRA</sequence>
<comment type="function">
    <text evidence="1">Bifunctional enzyme with both catalase and broad-spectrum peroxidase activity.</text>
</comment>
<comment type="catalytic activity">
    <reaction evidence="1">
        <text>H2O2 + AH2 = A + 2 H2O</text>
        <dbReference type="Rhea" id="RHEA:30275"/>
        <dbReference type="ChEBI" id="CHEBI:13193"/>
        <dbReference type="ChEBI" id="CHEBI:15377"/>
        <dbReference type="ChEBI" id="CHEBI:16240"/>
        <dbReference type="ChEBI" id="CHEBI:17499"/>
        <dbReference type="EC" id="1.11.1.21"/>
    </reaction>
</comment>
<comment type="catalytic activity">
    <reaction evidence="1">
        <text>2 H2O2 = O2 + 2 H2O</text>
        <dbReference type="Rhea" id="RHEA:20309"/>
        <dbReference type="ChEBI" id="CHEBI:15377"/>
        <dbReference type="ChEBI" id="CHEBI:15379"/>
        <dbReference type="ChEBI" id="CHEBI:16240"/>
        <dbReference type="EC" id="1.11.1.21"/>
    </reaction>
</comment>
<comment type="cofactor">
    <cofactor evidence="1">
        <name>heme b</name>
        <dbReference type="ChEBI" id="CHEBI:60344"/>
    </cofactor>
    <text evidence="1">Binds 1 heme b (iron(II)-protoporphyrin IX) group per dimer.</text>
</comment>
<comment type="subunit">
    <text evidence="1">Homodimer or homotetramer.</text>
</comment>
<comment type="PTM">
    <text evidence="1">Formation of the three residue Trp-Tyr-Met cross-link is important for the catalase, but not the peroxidase activity of the enzyme.</text>
</comment>
<comment type="similarity">
    <text evidence="1">Belongs to the peroxidase family. Peroxidase/catalase subfamily.</text>
</comment>
<accession>A6WS27</accession>
<organism>
    <name type="scientific">Shewanella baltica (strain OS185)</name>
    <dbReference type="NCBI Taxonomy" id="402882"/>
    <lineage>
        <taxon>Bacteria</taxon>
        <taxon>Pseudomonadati</taxon>
        <taxon>Pseudomonadota</taxon>
        <taxon>Gammaproteobacteria</taxon>
        <taxon>Alteromonadales</taxon>
        <taxon>Shewanellaceae</taxon>
        <taxon>Shewanella</taxon>
    </lineage>
</organism>
<evidence type="ECO:0000255" key="1">
    <source>
        <dbReference type="HAMAP-Rule" id="MF_01961"/>
    </source>
</evidence>
<protein>
    <recommendedName>
        <fullName evidence="1">Catalase-peroxidase</fullName>
        <shortName evidence="1">CP</shortName>
        <ecNumber evidence="1">1.11.1.21</ecNumber>
    </recommendedName>
    <alternativeName>
        <fullName evidence="1">Peroxidase/catalase</fullName>
    </alternativeName>
</protein>